<accession>A5IC64</accession>
<proteinExistence type="inferred from homology"/>
<organism>
    <name type="scientific">Legionella pneumophila (strain Corby)</name>
    <dbReference type="NCBI Taxonomy" id="400673"/>
    <lineage>
        <taxon>Bacteria</taxon>
        <taxon>Pseudomonadati</taxon>
        <taxon>Pseudomonadota</taxon>
        <taxon>Gammaproteobacteria</taxon>
        <taxon>Legionellales</taxon>
        <taxon>Legionellaceae</taxon>
        <taxon>Legionella</taxon>
    </lineage>
</organism>
<sequence length="262" mass="28738">MWNLAGKELSSRLLLGTACYPSLEHMQQAIHNSGTEVITISIKRQTSAGLDGESFWQAVKKLDCHLLPNTAGCRNAEAAINTAEIARELFNTHWIKLEVIGDDYNLQPEPFELIKAARILIDRGFEVFPYCTDDLVLCQKLVDAGCKILMPWGAPIGSGKGLINPYALETLRYRFPDITLIIDAGIGKPSHAVQVMELGFDGVLLNTAVALANHPALMATAFRHAVIAGHQAFIGGMMSERNVAHPSTPLIDTPFWHQVNNL</sequence>
<protein>
    <recommendedName>
        <fullName evidence="1">Thiazole synthase</fullName>
        <ecNumber evidence="1">2.8.1.10</ecNumber>
    </recommendedName>
</protein>
<reference key="1">
    <citation type="submission" date="2006-11" db="EMBL/GenBank/DDBJ databases">
        <title>Identification and characterization of a new conjugation/ type IVA secretion system (trb/tra) of L. pneumophila Corby localized on a mobile genomic island.</title>
        <authorList>
            <person name="Gloeckner G."/>
            <person name="Albert-Weissenberger C."/>
            <person name="Weinmann E."/>
            <person name="Jacobi S."/>
            <person name="Schunder E."/>
            <person name="Steinert M."/>
            <person name="Buchrieser C."/>
            <person name="Hacker J."/>
            <person name="Heuner K."/>
        </authorList>
    </citation>
    <scope>NUCLEOTIDE SEQUENCE [LARGE SCALE GENOMIC DNA]</scope>
    <source>
        <strain>Corby</strain>
    </source>
</reference>
<name>THIG_LEGPC</name>
<comment type="function">
    <text evidence="1">Catalyzes the rearrangement of 1-deoxy-D-xylulose 5-phosphate (DXP) to produce the thiazole phosphate moiety of thiamine. Sulfur is provided by the thiocarboxylate moiety of the carrier protein ThiS. In vitro, sulfur can be provided by H(2)S.</text>
</comment>
<comment type="catalytic activity">
    <reaction evidence="1">
        <text>[ThiS sulfur-carrier protein]-C-terminal-Gly-aminoethanethioate + 2-iminoacetate + 1-deoxy-D-xylulose 5-phosphate = [ThiS sulfur-carrier protein]-C-terminal Gly-Gly + 2-[(2R,5Z)-2-carboxy-4-methylthiazol-5(2H)-ylidene]ethyl phosphate + 2 H2O + H(+)</text>
        <dbReference type="Rhea" id="RHEA:26297"/>
        <dbReference type="Rhea" id="RHEA-COMP:12909"/>
        <dbReference type="Rhea" id="RHEA-COMP:19908"/>
        <dbReference type="ChEBI" id="CHEBI:15377"/>
        <dbReference type="ChEBI" id="CHEBI:15378"/>
        <dbReference type="ChEBI" id="CHEBI:57792"/>
        <dbReference type="ChEBI" id="CHEBI:62899"/>
        <dbReference type="ChEBI" id="CHEBI:77846"/>
        <dbReference type="ChEBI" id="CHEBI:90778"/>
        <dbReference type="ChEBI" id="CHEBI:232372"/>
        <dbReference type="EC" id="2.8.1.10"/>
    </reaction>
</comment>
<comment type="pathway">
    <text evidence="1">Cofactor biosynthesis; thiamine diphosphate biosynthesis.</text>
</comment>
<comment type="subunit">
    <text evidence="1">Homotetramer. Forms heterodimers with either ThiH or ThiS.</text>
</comment>
<comment type="subcellular location">
    <subcellularLocation>
        <location evidence="1">Cytoplasm</location>
    </subcellularLocation>
</comment>
<comment type="similarity">
    <text evidence="1">Belongs to the ThiG family.</text>
</comment>
<dbReference type="EC" id="2.8.1.10" evidence="1"/>
<dbReference type="EMBL" id="CP000675">
    <property type="protein sequence ID" value="ABQ54964.1"/>
    <property type="molecule type" value="Genomic_DNA"/>
</dbReference>
<dbReference type="RefSeq" id="WP_011946565.1">
    <property type="nucleotide sequence ID" value="NC_009494.2"/>
</dbReference>
<dbReference type="SMR" id="A5IC64"/>
<dbReference type="KEGG" id="lpc:LPC_0991"/>
<dbReference type="HOGENOM" id="CLU_062233_1_0_6"/>
<dbReference type="UniPathway" id="UPA00060"/>
<dbReference type="GO" id="GO:0005737">
    <property type="term" value="C:cytoplasm"/>
    <property type="evidence" value="ECO:0007669"/>
    <property type="project" value="UniProtKB-SubCell"/>
</dbReference>
<dbReference type="GO" id="GO:1990107">
    <property type="term" value="F:thiazole synthase activity"/>
    <property type="evidence" value="ECO:0007669"/>
    <property type="project" value="UniProtKB-EC"/>
</dbReference>
<dbReference type="GO" id="GO:0009229">
    <property type="term" value="P:thiamine diphosphate biosynthetic process"/>
    <property type="evidence" value="ECO:0007669"/>
    <property type="project" value="UniProtKB-UniRule"/>
</dbReference>
<dbReference type="CDD" id="cd04728">
    <property type="entry name" value="ThiG"/>
    <property type="match status" value="1"/>
</dbReference>
<dbReference type="Gene3D" id="3.20.20.70">
    <property type="entry name" value="Aldolase class I"/>
    <property type="match status" value="1"/>
</dbReference>
<dbReference type="HAMAP" id="MF_00443">
    <property type="entry name" value="ThiG"/>
    <property type="match status" value="1"/>
</dbReference>
<dbReference type="InterPro" id="IPR013785">
    <property type="entry name" value="Aldolase_TIM"/>
</dbReference>
<dbReference type="InterPro" id="IPR033983">
    <property type="entry name" value="Thiazole_synthase_ThiG"/>
</dbReference>
<dbReference type="InterPro" id="IPR008867">
    <property type="entry name" value="ThiG"/>
</dbReference>
<dbReference type="PANTHER" id="PTHR34266">
    <property type="entry name" value="THIAZOLE SYNTHASE"/>
    <property type="match status" value="1"/>
</dbReference>
<dbReference type="PANTHER" id="PTHR34266:SF2">
    <property type="entry name" value="THIAZOLE SYNTHASE"/>
    <property type="match status" value="1"/>
</dbReference>
<dbReference type="Pfam" id="PF05690">
    <property type="entry name" value="ThiG"/>
    <property type="match status" value="1"/>
</dbReference>
<dbReference type="SUPFAM" id="SSF110399">
    <property type="entry name" value="ThiG-like"/>
    <property type="match status" value="1"/>
</dbReference>
<keyword id="KW-0963">Cytoplasm</keyword>
<keyword id="KW-0704">Schiff base</keyword>
<keyword id="KW-0784">Thiamine biosynthesis</keyword>
<keyword id="KW-0808">Transferase</keyword>
<gene>
    <name evidence="1" type="primary">thiG</name>
    <name type="ordered locus">LPC_0991</name>
</gene>
<evidence type="ECO:0000255" key="1">
    <source>
        <dbReference type="HAMAP-Rule" id="MF_00443"/>
    </source>
</evidence>
<feature type="chain" id="PRO_1000206136" description="Thiazole synthase">
    <location>
        <begin position="1"/>
        <end position="262"/>
    </location>
</feature>
<feature type="active site" description="Schiff-base intermediate with DXP" evidence="1">
    <location>
        <position position="96"/>
    </location>
</feature>
<feature type="binding site" evidence="1">
    <location>
        <position position="157"/>
    </location>
    <ligand>
        <name>1-deoxy-D-xylulose 5-phosphate</name>
        <dbReference type="ChEBI" id="CHEBI:57792"/>
    </ligand>
</feature>
<feature type="binding site" evidence="1">
    <location>
        <begin position="184"/>
        <end position="185"/>
    </location>
    <ligand>
        <name>1-deoxy-D-xylulose 5-phosphate</name>
        <dbReference type="ChEBI" id="CHEBI:57792"/>
    </ligand>
</feature>
<feature type="binding site" evidence="1">
    <location>
        <begin position="206"/>
        <end position="207"/>
    </location>
    <ligand>
        <name>1-deoxy-D-xylulose 5-phosphate</name>
        <dbReference type="ChEBI" id="CHEBI:57792"/>
    </ligand>
</feature>